<accession>Q1D841</accession>
<reference key="1">
    <citation type="journal article" date="2006" name="Proc. Natl. Acad. Sci. U.S.A.">
        <title>Evolution of sensory complexity recorded in a myxobacterial genome.</title>
        <authorList>
            <person name="Goldman B.S."/>
            <person name="Nierman W.C."/>
            <person name="Kaiser D."/>
            <person name="Slater S.C."/>
            <person name="Durkin A.S."/>
            <person name="Eisen J.A."/>
            <person name="Ronning C.M."/>
            <person name="Barbazuk W.B."/>
            <person name="Blanchard M."/>
            <person name="Field C."/>
            <person name="Halling C."/>
            <person name="Hinkle G."/>
            <person name="Iartchuk O."/>
            <person name="Kim H.S."/>
            <person name="Mackenzie C."/>
            <person name="Madupu R."/>
            <person name="Miller N."/>
            <person name="Shvartsbeyn A."/>
            <person name="Sullivan S.A."/>
            <person name="Vaudin M."/>
            <person name="Wiegand R."/>
            <person name="Kaplan H.B."/>
        </authorList>
    </citation>
    <scope>NUCLEOTIDE SEQUENCE [LARGE SCALE GENOMIC DNA]</scope>
    <source>
        <strain>DK1622</strain>
    </source>
</reference>
<proteinExistence type="inferred from homology"/>
<comment type="function">
    <text evidence="1">Specifically methylates the uridine in position 2552 of 23S rRNA at the 2'-O position of the ribose in the fully assembled 50S ribosomal subunit.</text>
</comment>
<comment type="catalytic activity">
    <reaction evidence="1">
        <text>uridine(2552) in 23S rRNA + S-adenosyl-L-methionine = 2'-O-methyluridine(2552) in 23S rRNA + S-adenosyl-L-homocysteine + H(+)</text>
        <dbReference type="Rhea" id="RHEA:42720"/>
        <dbReference type="Rhea" id="RHEA-COMP:10202"/>
        <dbReference type="Rhea" id="RHEA-COMP:10203"/>
        <dbReference type="ChEBI" id="CHEBI:15378"/>
        <dbReference type="ChEBI" id="CHEBI:57856"/>
        <dbReference type="ChEBI" id="CHEBI:59789"/>
        <dbReference type="ChEBI" id="CHEBI:65315"/>
        <dbReference type="ChEBI" id="CHEBI:74478"/>
        <dbReference type="EC" id="2.1.1.166"/>
    </reaction>
</comment>
<comment type="subcellular location">
    <subcellularLocation>
        <location evidence="1">Cytoplasm</location>
    </subcellularLocation>
</comment>
<comment type="similarity">
    <text evidence="1">Belongs to the class I-like SAM-binding methyltransferase superfamily. RNA methyltransferase RlmE family.</text>
</comment>
<evidence type="ECO:0000255" key="1">
    <source>
        <dbReference type="HAMAP-Rule" id="MF_01547"/>
    </source>
</evidence>
<organism>
    <name type="scientific">Myxococcus xanthus (strain DK1622)</name>
    <dbReference type="NCBI Taxonomy" id="246197"/>
    <lineage>
        <taxon>Bacteria</taxon>
        <taxon>Pseudomonadati</taxon>
        <taxon>Myxococcota</taxon>
        <taxon>Myxococcia</taxon>
        <taxon>Myxococcales</taxon>
        <taxon>Cystobacterineae</taxon>
        <taxon>Myxococcaceae</taxon>
        <taxon>Myxococcus</taxon>
    </lineage>
</organism>
<keyword id="KW-0963">Cytoplasm</keyword>
<keyword id="KW-0489">Methyltransferase</keyword>
<keyword id="KW-1185">Reference proteome</keyword>
<keyword id="KW-0698">rRNA processing</keyword>
<keyword id="KW-0949">S-adenosyl-L-methionine</keyword>
<keyword id="KW-0808">Transferase</keyword>
<dbReference type="EC" id="2.1.1.166" evidence="1"/>
<dbReference type="EMBL" id="CP000113">
    <property type="protein sequence ID" value="ABF86514.1"/>
    <property type="molecule type" value="Genomic_DNA"/>
</dbReference>
<dbReference type="RefSeq" id="WP_011553029.1">
    <property type="nucleotide sequence ID" value="NC_008095.1"/>
</dbReference>
<dbReference type="SMR" id="Q1D841"/>
<dbReference type="STRING" id="246197.MXAN_2973"/>
<dbReference type="EnsemblBacteria" id="ABF86514">
    <property type="protein sequence ID" value="ABF86514"/>
    <property type="gene ID" value="MXAN_2973"/>
</dbReference>
<dbReference type="GeneID" id="41360336"/>
<dbReference type="KEGG" id="mxa:MXAN_2973"/>
<dbReference type="eggNOG" id="COG0293">
    <property type="taxonomic scope" value="Bacteria"/>
</dbReference>
<dbReference type="HOGENOM" id="CLU_009422_4_0_7"/>
<dbReference type="OrthoDB" id="9790080at2"/>
<dbReference type="Proteomes" id="UP000002402">
    <property type="component" value="Chromosome"/>
</dbReference>
<dbReference type="GO" id="GO:0005737">
    <property type="term" value="C:cytoplasm"/>
    <property type="evidence" value="ECO:0007669"/>
    <property type="project" value="UniProtKB-SubCell"/>
</dbReference>
<dbReference type="GO" id="GO:0008650">
    <property type="term" value="F:rRNA (uridine-2'-O-)-methyltransferase activity"/>
    <property type="evidence" value="ECO:0007669"/>
    <property type="project" value="UniProtKB-UniRule"/>
</dbReference>
<dbReference type="CDD" id="cd02440">
    <property type="entry name" value="AdoMet_MTases"/>
    <property type="match status" value="1"/>
</dbReference>
<dbReference type="Gene3D" id="3.40.50.150">
    <property type="entry name" value="Vaccinia Virus protein VP39"/>
    <property type="match status" value="1"/>
</dbReference>
<dbReference type="HAMAP" id="MF_01547">
    <property type="entry name" value="RNA_methyltr_E"/>
    <property type="match status" value="1"/>
</dbReference>
<dbReference type="InterPro" id="IPR050082">
    <property type="entry name" value="RNA_methyltr_RlmE"/>
</dbReference>
<dbReference type="InterPro" id="IPR002877">
    <property type="entry name" value="RNA_MeTrfase_FtsJ_dom"/>
</dbReference>
<dbReference type="InterPro" id="IPR015507">
    <property type="entry name" value="rRNA-MeTfrase_E"/>
</dbReference>
<dbReference type="InterPro" id="IPR029063">
    <property type="entry name" value="SAM-dependent_MTases_sf"/>
</dbReference>
<dbReference type="PANTHER" id="PTHR10920:SF13">
    <property type="entry name" value="PRE-RRNA 2'-O-RIBOSE RNA METHYLTRANSFERASE FTSJ3"/>
    <property type="match status" value="1"/>
</dbReference>
<dbReference type="PANTHER" id="PTHR10920">
    <property type="entry name" value="RIBOSOMAL RNA METHYLTRANSFERASE"/>
    <property type="match status" value="1"/>
</dbReference>
<dbReference type="Pfam" id="PF01728">
    <property type="entry name" value="FtsJ"/>
    <property type="match status" value="1"/>
</dbReference>
<dbReference type="PIRSF" id="PIRSF005461">
    <property type="entry name" value="23S_rRNA_mtase"/>
    <property type="match status" value="1"/>
</dbReference>
<dbReference type="SUPFAM" id="SSF53335">
    <property type="entry name" value="S-adenosyl-L-methionine-dependent methyltransferases"/>
    <property type="match status" value="1"/>
</dbReference>
<sequence>MLGSPPDMGKPYRPKDHYFQKAKQEGLRARSAFKVDELIKRFPMVKKGHVVLDLGAAPGGFLQILADAVGPKGRVIGVDIVAIRPFSQPFVQTAVLDVLADDFDAKLTELHAGPFDAVISDMAPKTSGIKATDEARSLRLAGKALELAAARGRPGSSFVAKVFMGRDFEDFRNQIRALFEEVKVVRPEATRGASMEVYLVGLRRRAPEAPEAN</sequence>
<feature type="chain" id="PRO_0000282763" description="Ribosomal RNA large subunit methyltransferase E">
    <location>
        <begin position="1"/>
        <end position="213"/>
    </location>
</feature>
<feature type="active site" description="Proton acceptor" evidence="1">
    <location>
        <position position="161"/>
    </location>
</feature>
<feature type="binding site" evidence="1">
    <location>
        <position position="59"/>
    </location>
    <ligand>
        <name>S-adenosyl-L-methionine</name>
        <dbReference type="ChEBI" id="CHEBI:59789"/>
    </ligand>
</feature>
<feature type="binding site" evidence="1">
    <location>
        <position position="61"/>
    </location>
    <ligand>
        <name>S-adenosyl-L-methionine</name>
        <dbReference type="ChEBI" id="CHEBI:59789"/>
    </ligand>
</feature>
<feature type="binding site" evidence="1">
    <location>
        <position position="79"/>
    </location>
    <ligand>
        <name>S-adenosyl-L-methionine</name>
        <dbReference type="ChEBI" id="CHEBI:59789"/>
    </ligand>
</feature>
<feature type="binding site" evidence="1">
    <location>
        <position position="97"/>
    </location>
    <ligand>
        <name>S-adenosyl-L-methionine</name>
        <dbReference type="ChEBI" id="CHEBI:59789"/>
    </ligand>
</feature>
<feature type="binding site" evidence="1">
    <location>
        <position position="121"/>
    </location>
    <ligand>
        <name>S-adenosyl-L-methionine</name>
        <dbReference type="ChEBI" id="CHEBI:59789"/>
    </ligand>
</feature>
<name>RLME_MYXXD</name>
<protein>
    <recommendedName>
        <fullName evidence="1">Ribosomal RNA large subunit methyltransferase E</fullName>
        <ecNumber evidence="1">2.1.1.166</ecNumber>
    </recommendedName>
    <alternativeName>
        <fullName evidence="1">23S rRNA Um2552 methyltransferase</fullName>
    </alternativeName>
    <alternativeName>
        <fullName evidence="1">rRNA (uridine-2'-O-)-methyltransferase</fullName>
    </alternativeName>
</protein>
<gene>
    <name evidence="1" type="primary">rlmE</name>
    <name evidence="1" type="synonym">ftsJ</name>
    <name evidence="1" type="synonym">rrmJ</name>
    <name type="ordered locus">MXAN_2973</name>
</gene>